<protein>
    <recommendedName>
        <fullName evidence="1">Probable Fe(2+)-trafficking protein</fullName>
    </recommendedName>
</protein>
<reference key="1">
    <citation type="journal article" date="2010" name="PLoS ONE">
        <title>The complete multipartite genome sequence of Cupriavidus necator JMP134, a versatile pollutant degrader.</title>
        <authorList>
            <person name="Lykidis A."/>
            <person name="Perez-Pantoja D."/>
            <person name="Ledger T."/>
            <person name="Mavromatis K."/>
            <person name="Anderson I.J."/>
            <person name="Ivanova N.N."/>
            <person name="Hooper S.D."/>
            <person name="Lapidus A."/>
            <person name="Lucas S."/>
            <person name="Gonzalez B."/>
            <person name="Kyrpides N.C."/>
        </authorList>
    </citation>
    <scope>NUCLEOTIDE SEQUENCE [LARGE SCALE GENOMIC DNA]</scope>
    <source>
        <strain>JMP134 / LMG 1197</strain>
    </source>
</reference>
<sequence length="90" mass="10225">MARMVQCIKLNKEAEGLDFPPLPGELGKKIWQSVSKEAWAGWLKHQTMLINENRLNMADARARQYLLKQTEKYFFGEGADEAAGYVPPQA</sequence>
<organism>
    <name type="scientific">Cupriavidus pinatubonensis (strain JMP 134 / LMG 1197)</name>
    <name type="common">Cupriavidus necator (strain JMP 134)</name>
    <dbReference type="NCBI Taxonomy" id="264198"/>
    <lineage>
        <taxon>Bacteria</taxon>
        <taxon>Pseudomonadati</taxon>
        <taxon>Pseudomonadota</taxon>
        <taxon>Betaproteobacteria</taxon>
        <taxon>Burkholderiales</taxon>
        <taxon>Burkholderiaceae</taxon>
        <taxon>Cupriavidus</taxon>
    </lineage>
</organism>
<evidence type="ECO:0000255" key="1">
    <source>
        <dbReference type="HAMAP-Rule" id="MF_00686"/>
    </source>
</evidence>
<accession>Q46ZK2</accession>
<gene>
    <name type="ordered locus">Reut_A2067</name>
</gene>
<dbReference type="EMBL" id="CP000090">
    <property type="protein sequence ID" value="AAZ61431.1"/>
    <property type="molecule type" value="Genomic_DNA"/>
</dbReference>
<dbReference type="SMR" id="Q46ZK2"/>
<dbReference type="STRING" id="264198.Reut_A2067"/>
<dbReference type="KEGG" id="reu:Reut_A2067"/>
<dbReference type="eggNOG" id="COG2924">
    <property type="taxonomic scope" value="Bacteria"/>
</dbReference>
<dbReference type="HOGENOM" id="CLU_170994_0_0_4"/>
<dbReference type="OrthoDB" id="9804318at2"/>
<dbReference type="GO" id="GO:0005829">
    <property type="term" value="C:cytosol"/>
    <property type="evidence" value="ECO:0007669"/>
    <property type="project" value="TreeGrafter"/>
</dbReference>
<dbReference type="GO" id="GO:0005506">
    <property type="term" value="F:iron ion binding"/>
    <property type="evidence" value="ECO:0007669"/>
    <property type="project" value="UniProtKB-UniRule"/>
</dbReference>
<dbReference type="GO" id="GO:0034599">
    <property type="term" value="P:cellular response to oxidative stress"/>
    <property type="evidence" value="ECO:0007669"/>
    <property type="project" value="TreeGrafter"/>
</dbReference>
<dbReference type="FunFam" id="1.10.3880.10:FF:000001">
    <property type="entry name" value="Probable Fe(2+)-trafficking protein"/>
    <property type="match status" value="1"/>
</dbReference>
<dbReference type="Gene3D" id="1.10.3880.10">
    <property type="entry name" value="Fe(II) trafficking protein YggX"/>
    <property type="match status" value="1"/>
</dbReference>
<dbReference type="HAMAP" id="MF_00686">
    <property type="entry name" value="Fe_traffic_YggX"/>
    <property type="match status" value="1"/>
</dbReference>
<dbReference type="InterPro" id="IPR007457">
    <property type="entry name" value="Fe_traffick_prot_YggX"/>
</dbReference>
<dbReference type="InterPro" id="IPR036766">
    <property type="entry name" value="Fe_traffick_prot_YggX_sf"/>
</dbReference>
<dbReference type="NCBIfam" id="NF003817">
    <property type="entry name" value="PRK05408.1"/>
    <property type="match status" value="1"/>
</dbReference>
<dbReference type="PANTHER" id="PTHR36965">
    <property type="entry name" value="FE(2+)-TRAFFICKING PROTEIN-RELATED"/>
    <property type="match status" value="1"/>
</dbReference>
<dbReference type="PANTHER" id="PTHR36965:SF1">
    <property type="entry name" value="FE(2+)-TRAFFICKING PROTEIN-RELATED"/>
    <property type="match status" value="1"/>
</dbReference>
<dbReference type="Pfam" id="PF04362">
    <property type="entry name" value="Iron_traffic"/>
    <property type="match status" value="1"/>
</dbReference>
<dbReference type="PIRSF" id="PIRSF029827">
    <property type="entry name" value="Fe_traffic_YggX"/>
    <property type="match status" value="1"/>
</dbReference>
<dbReference type="SUPFAM" id="SSF111148">
    <property type="entry name" value="YggX-like"/>
    <property type="match status" value="1"/>
</dbReference>
<keyword id="KW-0408">Iron</keyword>
<comment type="function">
    <text evidence="1">Could be a mediator in iron transactions between iron acquisition and iron-requiring processes, such as synthesis and/or repair of Fe-S clusters in biosynthetic enzymes.</text>
</comment>
<comment type="similarity">
    <text evidence="1">Belongs to the Fe(2+)-trafficking protein family.</text>
</comment>
<name>FETP_CUPPJ</name>
<feature type="chain" id="PRO_0000246112" description="Probable Fe(2+)-trafficking protein">
    <location>
        <begin position="1"/>
        <end position="90"/>
    </location>
</feature>
<proteinExistence type="inferred from homology"/>